<protein>
    <recommendedName>
        <fullName evidence="1">Malate dehydrogenase</fullName>
        <ecNumber evidence="1">1.1.1.37</ecNumber>
    </recommendedName>
</protein>
<keyword id="KW-0520">NAD</keyword>
<keyword id="KW-0560">Oxidoreductase</keyword>
<keyword id="KW-0816">Tricarboxylic acid cycle</keyword>
<gene>
    <name evidence="1" type="primary">mdh</name>
    <name type="ordered locus">VFMJ11_0264</name>
</gene>
<feature type="chain" id="PRO_1000191600" description="Malate dehydrogenase">
    <location>
        <begin position="1"/>
        <end position="311"/>
    </location>
</feature>
<feature type="active site" description="Proton acceptor" evidence="1">
    <location>
        <position position="177"/>
    </location>
</feature>
<feature type="binding site" evidence="1">
    <location>
        <begin position="7"/>
        <end position="13"/>
    </location>
    <ligand>
        <name>NAD(+)</name>
        <dbReference type="ChEBI" id="CHEBI:57540"/>
    </ligand>
</feature>
<feature type="binding site" evidence="1">
    <location>
        <position position="34"/>
    </location>
    <ligand>
        <name>NAD(+)</name>
        <dbReference type="ChEBI" id="CHEBI:57540"/>
    </ligand>
</feature>
<feature type="binding site" evidence="1">
    <location>
        <position position="81"/>
    </location>
    <ligand>
        <name>substrate</name>
    </ligand>
</feature>
<feature type="binding site" evidence="1">
    <location>
        <position position="87"/>
    </location>
    <ligand>
        <name>substrate</name>
    </ligand>
</feature>
<feature type="binding site" evidence="1">
    <location>
        <position position="94"/>
    </location>
    <ligand>
        <name>NAD(+)</name>
        <dbReference type="ChEBI" id="CHEBI:57540"/>
    </ligand>
</feature>
<feature type="binding site" evidence="1">
    <location>
        <begin position="117"/>
        <end position="119"/>
    </location>
    <ligand>
        <name>NAD(+)</name>
        <dbReference type="ChEBI" id="CHEBI:57540"/>
    </ligand>
</feature>
<feature type="binding site" evidence="1">
    <location>
        <position position="119"/>
    </location>
    <ligand>
        <name>substrate</name>
    </ligand>
</feature>
<feature type="binding site" evidence="1">
    <location>
        <position position="153"/>
    </location>
    <ligand>
        <name>substrate</name>
    </ligand>
</feature>
<feature type="binding site" evidence="1">
    <location>
        <position position="227"/>
    </location>
    <ligand>
        <name>NAD(+)</name>
        <dbReference type="ChEBI" id="CHEBI:57540"/>
    </ligand>
</feature>
<name>MDH_ALIFM</name>
<sequence>MKVAVIGAAGGIGQALALLLKNRLPAGSDLALYDIAPVTPGVAADLSHIPTPVSIKGYCGEDPTPALEGADVVLISAGVARKPGMDRSDLFNINAGIVKSLTEKIAVTCPKACIGIITNPVNTTVAIAAEVLKKAGVYDKNKLFGVTTLDVIRSETFVAELKDKDPGEIRVPVIGGHSGVTILPLLSQVEGVEFTAEEVAALTPRIQNAGTEVVEAKAGGGSATLSMGQAACRFGLSLVKALSGEQGVVECAYVEGNGEHARFFAQPILLGKNGVEEIQSYGELSAFEQEALESMLDTLRGDIKIGEEFVQ</sequence>
<comment type="function">
    <text evidence="1">Catalyzes the reversible oxidation of malate to oxaloacetate.</text>
</comment>
<comment type="catalytic activity">
    <reaction evidence="1">
        <text>(S)-malate + NAD(+) = oxaloacetate + NADH + H(+)</text>
        <dbReference type="Rhea" id="RHEA:21432"/>
        <dbReference type="ChEBI" id="CHEBI:15378"/>
        <dbReference type="ChEBI" id="CHEBI:15589"/>
        <dbReference type="ChEBI" id="CHEBI:16452"/>
        <dbReference type="ChEBI" id="CHEBI:57540"/>
        <dbReference type="ChEBI" id="CHEBI:57945"/>
        <dbReference type="EC" id="1.1.1.37"/>
    </reaction>
</comment>
<comment type="subunit">
    <text evidence="1">Homodimer.</text>
</comment>
<comment type="similarity">
    <text evidence="1">Belongs to the LDH/MDH superfamily. MDH type 1 family.</text>
</comment>
<reference key="1">
    <citation type="submission" date="2008-08" db="EMBL/GenBank/DDBJ databases">
        <title>Complete sequence of Vibrio fischeri strain MJ11.</title>
        <authorList>
            <person name="Mandel M.J."/>
            <person name="Stabb E.V."/>
            <person name="Ruby E.G."/>
            <person name="Ferriera S."/>
            <person name="Johnson J."/>
            <person name="Kravitz S."/>
            <person name="Beeson K."/>
            <person name="Sutton G."/>
            <person name="Rogers Y.-H."/>
            <person name="Friedman R."/>
            <person name="Frazier M."/>
            <person name="Venter J.C."/>
        </authorList>
    </citation>
    <scope>NUCLEOTIDE SEQUENCE [LARGE SCALE GENOMIC DNA]</scope>
    <source>
        <strain>MJ11</strain>
    </source>
</reference>
<organism>
    <name type="scientific">Aliivibrio fischeri (strain MJ11)</name>
    <name type="common">Vibrio fischeri</name>
    <dbReference type="NCBI Taxonomy" id="388396"/>
    <lineage>
        <taxon>Bacteria</taxon>
        <taxon>Pseudomonadati</taxon>
        <taxon>Pseudomonadota</taxon>
        <taxon>Gammaproteobacteria</taxon>
        <taxon>Vibrionales</taxon>
        <taxon>Vibrionaceae</taxon>
        <taxon>Aliivibrio</taxon>
    </lineage>
</organism>
<proteinExistence type="inferred from homology"/>
<accession>B5FGF5</accession>
<evidence type="ECO:0000255" key="1">
    <source>
        <dbReference type="HAMAP-Rule" id="MF_01516"/>
    </source>
</evidence>
<dbReference type="EC" id="1.1.1.37" evidence="1"/>
<dbReference type="EMBL" id="CP001139">
    <property type="protein sequence ID" value="ACH65140.1"/>
    <property type="molecule type" value="Genomic_DNA"/>
</dbReference>
<dbReference type="RefSeq" id="WP_012532844.1">
    <property type="nucleotide sequence ID" value="NC_011184.1"/>
</dbReference>
<dbReference type="SMR" id="B5FGF5"/>
<dbReference type="KEGG" id="vfm:VFMJ11_0264"/>
<dbReference type="HOGENOM" id="CLU_047181_1_0_6"/>
<dbReference type="Proteomes" id="UP000001857">
    <property type="component" value="Chromosome I"/>
</dbReference>
<dbReference type="GO" id="GO:0005737">
    <property type="term" value="C:cytoplasm"/>
    <property type="evidence" value="ECO:0007669"/>
    <property type="project" value="TreeGrafter"/>
</dbReference>
<dbReference type="GO" id="GO:0030060">
    <property type="term" value="F:L-malate dehydrogenase (NAD+) activity"/>
    <property type="evidence" value="ECO:0007669"/>
    <property type="project" value="UniProtKB-UniRule"/>
</dbReference>
<dbReference type="GO" id="GO:0006108">
    <property type="term" value="P:malate metabolic process"/>
    <property type="evidence" value="ECO:0007669"/>
    <property type="project" value="InterPro"/>
</dbReference>
<dbReference type="GO" id="GO:0006099">
    <property type="term" value="P:tricarboxylic acid cycle"/>
    <property type="evidence" value="ECO:0007669"/>
    <property type="project" value="UniProtKB-UniRule"/>
</dbReference>
<dbReference type="CDD" id="cd01337">
    <property type="entry name" value="MDH_glyoxysomal_mitochondrial"/>
    <property type="match status" value="1"/>
</dbReference>
<dbReference type="FunFam" id="3.40.50.720:FF:000017">
    <property type="entry name" value="Malate dehydrogenase"/>
    <property type="match status" value="1"/>
</dbReference>
<dbReference type="FunFam" id="3.90.110.10:FF:000001">
    <property type="entry name" value="Malate dehydrogenase"/>
    <property type="match status" value="1"/>
</dbReference>
<dbReference type="Gene3D" id="3.90.110.10">
    <property type="entry name" value="Lactate dehydrogenase/glycoside hydrolase, family 4, C-terminal"/>
    <property type="match status" value="1"/>
</dbReference>
<dbReference type="Gene3D" id="3.40.50.720">
    <property type="entry name" value="NAD(P)-binding Rossmann-like Domain"/>
    <property type="match status" value="1"/>
</dbReference>
<dbReference type="HAMAP" id="MF_01516">
    <property type="entry name" value="Malate_dehydrog_1"/>
    <property type="match status" value="1"/>
</dbReference>
<dbReference type="InterPro" id="IPR001557">
    <property type="entry name" value="L-lactate/malate_DH"/>
</dbReference>
<dbReference type="InterPro" id="IPR022383">
    <property type="entry name" value="Lactate/malate_DH_C"/>
</dbReference>
<dbReference type="InterPro" id="IPR001236">
    <property type="entry name" value="Lactate/malate_DH_N"/>
</dbReference>
<dbReference type="InterPro" id="IPR015955">
    <property type="entry name" value="Lactate_DH/Glyco_Ohase_4_C"/>
</dbReference>
<dbReference type="InterPro" id="IPR001252">
    <property type="entry name" value="Malate_DH_AS"/>
</dbReference>
<dbReference type="InterPro" id="IPR010097">
    <property type="entry name" value="Malate_DH_type1"/>
</dbReference>
<dbReference type="InterPro" id="IPR023958">
    <property type="entry name" value="Malate_DH_type1_bac"/>
</dbReference>
<dbReference type="InterPro" id="IPR036291">
    <property type="entry name" value="NAD(P)-bd_dom_sf"/>
</dbReference>
<dbReference type="NCBIfam" id="TIGR01772">
    <property type="entry name" value="MDH_euk_gproteo"/>
    <property type="match status" value="1"/>
</dbReference>
<dbReference type="PANTHER" id="PTHR11540">
    <property type="entry name" value="MALATE AND LACTATE DEHYDROGENASE"/>
    <property type="match status" value="1"/>
</dbReference>
<dbReference type="PANTHER" id="PTHR11540:SF16">
    <property type="entry name" value="MALATE DEHYDROGENASE, MITOCHONDRIAL"/>
    <property type="match status" value="1"/>
</dbReference>
<dbReference type="Pfam" id="PF02866">
    <property type="entry name" value="Ldh_1_C"/>
    <property type="match status" value="1"/>
</dbReference>
<dbReference type="Pfam" id="PF00056">
    <property type="entry name" value="Ldh_1_N"/>
    <property type="match status" value="1"/>
</dbReference>
<dbReference type="PIRSF" id="PIRSF000102">
    <property type="entry name" value="Lac_mal_DH"/>
    <property type="match status" value="1"/>
</dbReference>
<dbReference type="SUPFAM" id="SSF56327">
    <property type="entry name" value="LDH C-terminal domain-like"/>
    <property type="match status" value="1"/>
</dbReference>
<dbReference type="SUPFAM" id="SSF51735">
    <property type="entry name" value="NAD(P)-binding Rossmann-fold domains"/>
    <property type="match status" value="1"/>
</dbReference>
<dbReference type="PROSITE" id="PS00068">
    <property type="entry name" value="MDH"/>
    <property type="match status" value="1"/>
</dbReference>